<protein>
    <recommendedName>
        <fullName>Casein kinase I isoform gamma-1</fullName>
        <shortName>CKI-gamma 1</shortName>
        <ecNumber>2.7.11.1</ecNumber>
    </recommendedName>
</protein>
<organism>
    <name type="scientific">Bos taurus</name>
    <name type="common">Bovine</name>
    <dbReference type="NCBI Taxonomy" id="9913"/>
    <lineage>
        <taxon>Eukaryota</taxon>
        <taxon>Metazoa</taxon>
        <taxon>Chordata</taxon>
        <taxon>Craniata</taxon>
        <taxon>Vertebrata</taxon>
        <taxon>Euteleostomi</taxon>
        <taxon>Mammalia</taxon>
        <taxon>Eutheria</taxon>
        <taxon>Laurasiatheria</taxon>
        <taxon>Artiodactyla</taxon>
        <taxon>Ruminantia</taxon>
        <taxon>Pecora</taxon>
        <taxon>Bovidae</taxon>
        <taxon>Bovinae</taxon>
        <taxon>Bos</taxon>
    </lineage>
</organism>
<proteinExistence type="evidence at transcript level"/>
<feature type="chain" id="PRO_0000364341" description="Casein kinase I isoform gamma-1">
    <location>
        <begin position="1"/>
        <end position="457"/>
    </location>
</feature>
<feature type="domain" description="Protein kinase" evidence="3">
    <location>
        <begin position="43"/>
        <end position="314"/>
    </location>
</feature>
<feature type="region of interest" description="Disordered" evidence="5">
    <location>
        <begin position="1"/>
        <end position="36"/>
    </location>
</feature>
<feature type="region of interest" description="Disordered" evidence="5">
    <location>
        <begin position="350"/>
        <end position="384"/>
    </location>
</feature>
<feature type="compositionally biased region" description="Basic and acidic residues" evidence="5">
    <location>
        <begin position="1"/>
        <end position="13"/>
    </location>
</feature>
<feature type="compositionally biased region" description="Basic and acidic residues" evidence="5">
    <location>
        <begin position="350"/>
        <end position="359"/>
    </location>
</feature>
<feature type="compositionally biased region" description="Polar residues" evidence="5">
    <location>
        <begin position="360"/>
        <end position="370"/>
    </location>
</feature>
<feature type="active site" description="Proton acceptor" evidence="3 4">
    <location>
        <position position="163"/>
    </location>
</feature>
<feature type="binding site" evidence="3">
    <location>
        <begin position="49"/>
        <end position="57"/>
    </location>
    <ligand>
        <name>ATP</name>
        <dbReference type="ChEBI" id="CHEBI:30616"/>
    </ligand>
</feature>
<feature type="binding site" evidence="3">
    <location>
        <position position="72"/>
    </location>
    <ligand>
        <name>ATP</name>
        <dbReference type="ChEBI" id="CHEBI:30616"/>
    </ligand>
</feature>
<feature type="modified residue" description="Phosphoserine" evidence="2">
    <location>
        <position position="343"/>
    </location>
</feature>
<feature type="splice variant" id="VSP_036439" description="In isoform 2." evidence="6">
    <original>TASSERRGEWEIQPSRQTNTSYLTSHLAADRHGGSVQVVSSTNGELNVDDPTGAHSNAPITAHAEVEVVEEAKCCCFFKRKRKKTTQRHK</original>
    <variation>IRKLRHRKSEDLAQGPTATKTFNSRVVCPAGSLFPLPSTHISRNHVQEMKPGDRSSCTSKRSLIGSTLTR</variation>
    <location>
        <begin position="368"/>
        <end position="457"/>
    </location>
</feature>
<feature type="sequence conflict" description="In Ref. 2; AAI10010." evidence="7" ref="2">
    <original>I</original>
    <variation>V</variation>
    <location>
        <position position="274"/>
    </location>
</feature>
<gene>
    <name type="primary">CSNK1G1</name>
</gene>
<comment type="function">
    <text evidence="1">Serine/threonine-protein kinase. Casein kinases are operationally defined by their preferential utilization of acidic proteins such as caseins as substrates. It can phosphorylate a large number of proteins. Participates in Wnt signaling. Regulates fast synaptic transmission mediated by glutamate. Phosphorylates CLSPN (By similarity).</text>
</comment>
<comment type="catalytic activity">
    <reaction>
        <text>L-seryl-[protein] + ATP = O-phospho-L-seryl-[protein] + ADP + H(+)</text>
        <dbReference type="Rhea" id="RHEA:17989"/>
        <dbReference type="Rhea" id="RHEA-COMP:9863"/>
        <dbReference type="Rhea" id="RHEA-COMP:11604"/>
        <dbReference type="ChEBI" id="CHEBI:15378"/>
        <dbReference type="ChEBI" id="CHEBI:29999"/>
        <dbReference type="ChEBI" id="CHEBI:30616"/>
        <dbReference type="ChEBI" id="CHEBI:83421"/>
        <dbReference type="ChEBI" id="CHEBI:456216"/>
        <dbReference type="EC" id="2.7.11.1"/>
    </reaction>
</comment>
<comment type="catalytic activity">
    <reaction>
        <text>L-threonyl-[protein] + ATP = O-phospho-L-threonyl-[protein] + ADP + H(+)</text>
        <dbReference type="Rhea" id="RHEA:46608"/>
        <dbReference type="Rhea" id="RHEA-COMP:11060"/>
        <dbReference type="Rhea" id="RHEA-COMP:11605"/>
        <dbReference type="ChEBI" id="CHEBI:15378"/>
        <dbReference type="ChEBI" id="CHEBI:30013"/>
        <dbReference type="ChEBI" id="CHEBI:30616"/>
        <dbReference type="ChEBI" id="CHEBI:61977"/>
        <dbReference type="ChEBI" id="CHEBI:456216"/>
        <dbReference type="EC" id="2.7.11.1"/>
    </reaction>
</comment>
<comment type="subunit">
    <text evidence="1">Monomer.</text>
</comment>
<comment type="subcellular location">
    <subcellularLocation>
        <location evidence="1">Cytoplasm</location>
    </subcellularLocation>
</comment>
<comment type="alternative products">
    <event type="alternative splicing"/>
    <isoform>
        <id>A7E3X2-1</id>
        <name>1</name>
        <sequence type="displayed"/>
    </isoform>
    <isoform>
        <id>A7E3X2-2</id>
        <name>2</name>
        <sequence type="described" ref="VSP_036439"/>
    </isoform>
</comment>
<comment type="PTM">
    <text evidence="1">Autophosphorylated.</text>
</comment>
<comment type="similarity">
    <text evidence="7">Belongs to the protein kinase superfamily. CK1 Ser/Thr protein kinase family. Casein kinase I subfamily.</text>
</comment>
<dbReference type="EC" id="2.7.11.1"/>
<dbReference type="EMBL" id="BT030743">
    <property type="protein sequence ID" value="ABS45059.1"/>
    <property type="molecule type" value="mRNA"/>
</dbReference>
<dbReference type="EMBL" id="BC110009">
    <property type="protein sequence ID" value="AAI10010.1"/>
    <property type="molecule type" value="mRNA"/>
</dbReference>
<dbReference type="RefSeq" id="NP_001033235.1">
    <property type="nucleotide sequence ID" value="NM_001038146.2"/>
</dbReference>
<dbReference type="RefSeq" id="XP_005211737.1">
    <property type="nucleotide sequence ID" value="XM_005211680.3"/>
</dbReference>
<dbReference type="RefSeq" id="XP_010807562.1">
    <property type="nucleotide sequence ID" value="XM_010809260.2"/>
</dbReference>
<dbReference type="SMR" id="A7E3X2"/>
<dbReference type="FunCoup" id="A7E3X2">
    <property type="interactions" value="4004"/>
</dbReference>
<dbReference type="STRING" id="9913.ENSBTAP00000062459"/>
<dbReference type="PaxDb" id="9913-ENSBTAP00000022379"/>
<dbReference type="GeneID" id="527889"/>
<dbReference type="KEGG" id="bta:527889"/>
<dbReference type="CTD" id="53944"/>
<dbReference type="VEuPathDB" id="HostDB:ENSBTAG00000016823"/>
<dbReference type="eggNOG" id="KOG1165">
    <property type="taxonomic scope" value="Eukaryota"/>
</dbReference>
<dbReference type="HOGENOM" id="CLU_019279_2_0_1"/>
<dbReference type="InParanoid" id="A7E3X2"/>
<dbReference type="OrthoDB" id="5800476at2759"/>
<dbReference type="TreeFam" id="TF313349"/>
<dbReference type="Proteomes" id="UP000009136">
    <property type="component" value="Chromosome 10"/>
</dbReference>
<dbReference type="Bgee" id="ENSBTAG00000016823">
    <property type="expression patterns" value="Expressed in semen and 111 other cell types or tissues"/>
</dbReference>
<dbReference type="GO" id="GO:0005737">
    <property type="term" value="C:cytoplasm"/>
    <property type="evidence" value="ECO:0000318"/>
    <property type="project" value="GO_Central"/>
</dbReference>
<dbReference type="GO" id="GO:0005634">
    <property type="term" value="C:nucleus"/>
    <property type="evidence" value="ECO:0000318"/>
    <property type="project" value="GO_Central"/>
</dbReference>
<dbReference type="GO" id="GO:0005886">
    <property type="term" value="C:plasma membrane"/>
    <property type="evidence" value="ECO:0000318"/>
    <property type="project" value="GO_Central"/>
</dbReference>
<dbReference type="GO" id="GO:0005524">
    <property type="term" value="F:ATP binding"/>
    <property type="evidence" value="ECO:0007669"/>
    <property type="project" value="UniProtKB-KW"/>
</dbReference>
<dbReference type="GO" id="GO:0106310">
    <property type="term" value="F:protein serine kinase activity"/>
    <property type="evidence" value="ECO:0007669"/>
    <property type="project" value="RHEA"/>
</dbReference>
<dbReference type="GO" id="GO:0004674">
    <property type="term" value="F:protein serine/threonine kinase activity"/>
    <property type="evidence" value="ECO:0000318"/>
    <property type="project" value="GO_Central"/>
</dbReference>
<dbReference type="GO" id="GO:0006897">
    <property type="term" value="P:endocytosis"/>
    <property type="evidence" value="ECO:0000318"/>
    <property type="project" value="GO_Central"/>
</dbReference>
<dbReference type="GO" id="GO:0090263">
    <property type="term" value="P:positive regulation of canonical Wnt signaling pathway"/>
    <property type="evidence" value="ECO:0000318"/>
    <property type="project" value="GO_Central"/>
</dbReference>
<dbReference type="GO" id="GO:0007165">
    <property type="term" value="P:signal transduction"/>
    <property type="evidence" value="ECO:0000318"/>
    <property type="project" value="GO_Central"/>
</dbReference>
<dbReference type="GO" id="GO:0016055">
    <property type="term" value="P:Wnt signaling pathway"/>
    <property type="evidence" value="ECO:0007669"/>
    <property type="project" value="UniProtKB-KW"/>
</dbReference>
<dbReference type="CDD" id="cd14126">
    <property type="entry name" value="STKc_CK1_gamma"/>
    <property type="match status" value="1"/>
</dbReference>
<dbReference type="FunFam" id="1.10.510.10:FF:001113">
    <property type="entry name" value="Casein kinase 1 gamma 2"/>
    <property type="match status" value="1"/>
</dbReference>
<dbReference type="FunFam" id="3.30.200.20:FF:000018">
    <property type="entry name" value="Casein kinase I isoform gamma-1"/>
    <property type="match status" value="1"/>
</dbReference>
<dbReference type="Gene3D" id="3.30.200.20">
    <property type="entry name" value="Phosphorylase Kinase, domain 1"/>
    <property type="match status" value="1"/>
</dbReference>
<dbReference type="Gene3D" id="1.10.510.10">
    <property type="entry name" value="Transferase(Phosphotransferase) domain 1"/>
    <property type="match status" value="1"/>
</dbReference>
<dbReference type="InterPro" id="IPR022247">
    <property type="entry name" value="Casein_kinase-1_gamma_C"/>
</dbReference>
<dbReference type="InterPro" id="IPR050235">
    <property type="entry name" value="CK1_Ser-Thr_kinase"/>
</dbReference>
<dbReference type="InterPro" id="IPR011009">
    <property type="entry name" value="Kinase-like_dom_sf"/>
</dbReference>
<dbReference type="InterPro" id="IPR000719">
    <property type="entry name" value="Prot_kinase_dom"/>
</dbReference>
<dbReference type="InterPro" id="IPR017441">
    <property type="entry name" value="Protein_kinase_ATP_BS"/>
</dbReference>
<dbReference type="InterPro" id="IPR008271">
    <property type="entry name" value="Ser/Thr_kinase_AS"/>
</dbReference>
<dbReference type="PANTHER" id="PTHR11909">
    <property type="entry name" value="CASEIN KINASE-RELATED"/>
    <property type="match status" value="1"/>
</dbReference>
<dbReference type="Pfam" id="PF12605">
    <property type="entry name" value="CK1gamma_C"/>
    <property type="match status" value="1"/>
</dbReference>
<dbReference type="Pfam" id="PF00069">
    <property type="entry name" value="Pkinase"/>
    <property type="match status" value="1"/>
</dbReference>
<dbReference type="SMART" id="SM00220">
    <property type="entry name" value="S_TKc"/>
    <property type="match status" value="1"/>
</dbReference>
<dbReference type="SUPFAM" id="SSF56112">
    <property type="entry name" value="Protein kinase-like (PK-like)"/>
    <property type="match status" value="1"/>
</dbReference>
<dbReference type="PROSITE" id="PS00107">
    <property type="entry name" value="PROTEIN_KINASE_ATP"/>
    <property type="match status" value="1"/>
</dbReference>
<dbReference type="PROSITE" id="PS50011">
    <property type="entry name" value="PROTEIN_KINASE_DOM"/>
    <property type="match status" value="1"/>
</dbReference>
<dbReference type="PROSITE" id="PS00108">
    <property type="entry name" value="PROTEIN_KINASE_ST"/>
    <property type="match status" value="1"/>
</dbReference>
<sequence>MDHPSREKDERQRTTKPMAQRREHCSRPSGSTSSGVLMVGPNFRVGKKIGCGNFGELRLGKNLYTNEYVAIKLEPIKSRAPQLHLEYRFYKQLGSAGEGLPQVYYFGPCGKYNAMVLELLGPSLEDLFDLCDRTFTLKTVLMIAIQLLSRMEYVHSKNLIYRDVKPENFLIGRQGNKKEHVIHIIDFGLAKEYIDPETKKHIPYREHKSLTGTARYMSINTHLGKEQSRRDDLEALGHMFMYFLRGSLPWQGLKADTLKERYQKIGDTKRNTPIEVLCENFPEEMATYLRYVRRLDFFEKPDYEYLRTLFTDLFERKGYTFDYAYDWVGRPIPTPVGSVHVDSGASAITRESHTHRDRPSQQPLRNQTASSERRGEWEIQPSRQTNTSYLTSHLAADRHGGSVQVVSSTNGELNVDDPTGAHSNAPITAHAEVEVVEEAKCCCFFKRKRKKTTQRHK</sequence>
<evidence type="ECO:0000250" key="1"/>
<evidence type="ECO:0000250" key="2">
    <source>
        <dbReference type="UniProtKB" id="Q9HCP0"/>
    </source>
</evidence>
<evidence type="ECO:0000255" key="3">
    <source>
        <dbReference type="PROSITE-ProRule" id="PRU00159"/>
    </source>
</evidence>
<evidence type="ECO:0000255" key="4">
    <source>
        <dbReference type="PROSITE-ProRule" id="PRU10027"/>
    </source>
</evidence>
<evidence type="ECO:0000256" key="5">
    <source>
        <dbReference type="SAM" id="MobiDB-lite"/>
    </source>
</evidence>
<evidence type="ECO:0000303" key="6">
    <source ref="2"/>
</evidence>
<evidence type="ECO:0000305" key="7"/>
<keyword id="KW-0025">Alternative splicing</keyword>
<keyword id="KW-0067">ATP-binding</keyword>
<keyword id="KW-0963">Cytoplasm</keyword>
<keyword id="KW-0418">Kinase</keyword>
<keyword id="KW-0547">Nucleotide-binding</keyword>
<keyword id="KW-0597">Phosphoprotein</keyword>
<keyword id="KW-1185">Reference proteome</keyword>
<keyword id="KW-0723">Serine/threonine-protein kinase</keyword>
<keyword id="KW-0808">Transferase</keyword>
<keyword id="KW-0879">Wnt signaling pathway</keyword>
<reference key="1">
    <citation type="journal article" date="2005" name="BMC Genomics">
        <title>Characterization of 954 bovine full-CDS cDNA sequences.</title>
        <authorList>
            <person name="Harhay G.P."/>
            <person name="Sonstegard T.S."/>
            <person name="Keele J.W."/>
            <person name="Heaton M.P."/>
            <person name="Clawson M.L."/>
            <person name="Snelling W.M."/>
            <person name="Wiedmann R.T."/>
            <person name="Van Tassell C.P."/>
            <person name="Smith T.P.L."/>
        </authorList>
    </citation>
    <scope>NUCLEOTIDE SEQUENCE [LARGE SCALE MRNA] (ISOFORM 1)</scope>
</reference>
<reference key="2">
    <citation type="submission" date="2005-11" db="EMBL/GenBank/DDBJ databases">
        <authorList>
            <consortium name="NIH - Mammalian Gene Collection (MGC) project"/>
        </authorList>
    </citation>
    <scope>NUCLEOTIDE SEQUENCE [LARGE SCALE MRNA] (ISOFORM 2)</scope>
    <source>
        <strain>Crossbred X Angus</strain>
        <tissue>Liver</tissue>
    </source>
</reference>
<accession>A7E3X2</accession>
<accession>Q32KN4</accession>
<name>KC1G1_BOVIN</name>